<reference evidence="6" key="1">
    <citation type="journal article" date="2003" name="PLoS Biol.">
        <title>The genome sequence of Caenorhabditis briggsae: a platform for comparative genomics.</title>
        <authorList>
            <person name="Stein L.D."/>
            <person name="Bao Z."/>
            <person name="Blasiar D."/>
            <person name="Blumenthal T."/>
            <person name="Brent M.R."/>
            <person name="Chen N."/>
            <person name="Chinwalla A."/>
            <person name="Clarke L."/>
            <person name="Clee C."/>
            <person name="Coghlan A."/>
            <person name="Coulson A."/>
            <person name="D'Eustachio P."/>
            <person name="Fitch D.H.A."/>
            <person name="Fulton L.A."/>
            <person name="Fulton R.E."/>
            <person name="Griffiths-Jones S."/>
            <person name="Harris T.W."/>
            <person name="Hillier L.W."/>
            <person name="Kamath R."/>
            <person name="Kuwabara P.E."/>
            <person name="Mardis E.R."/>
            <person name="Marra M.A."/>
            <person name="Miner T.L."/>
            <person name="Minx P."/>
            <person name="Mullikin J.C."/>
            <person name="Plumb R.W."/>
            <person name="Rogers J."/>
            <person name="Schein J.E."/>
            <person name="Sohrmann M."/>
            <person name="Spieth J."/>
            <person name="Stajich J.E."/>
            <person name="Wei C."/>
            <person name="Willey D."/>
            <person name="Wilson R.K."/>
            <person name="Durbin R.M."/>
            <person name="Waterston R.H."/>
        </authorList>
    </citation>
    <scope>NUCLEOTIDE SEQUENCE [LARGE SCALE GENOMIC DNA]</scope>
    <source>
        <strain evidence="6">AF16</strain>
    </source>
</reference>
<proteinExistence type="inferred from homology"/>
<sequence>MVICHSCTTFCILLVIDLVPCRIVGMENVENRVMFSLLDRSPQTNDTGPKPEKFEIAKGKFKVLEENSIGADTVSHLPTTREEHVSAVVPMPNFDPHRLEKALRTKGSIDGTEEALYRSLLDHTVYEKDVRPCIHHSQPTNVTFGFLLNQIVEMDERNQALTTRSWLNINWMDPRLSWNESLWSDIKAIYIPHARIWKPDIILVNNAIREYYASLVSTDVMVTSDGNVTWLFSALFRSSCPIRVRYYPFDDQQCDLKFASWSHDITEINLGLNTDKGDLSSYMNNSEFDLVDMTAVREVVRFPSDTNSDWPTIVIRIHMHRRPLFYVFNHIVPCVLISSMAVLGFLMPPETGEKINMIITTLLSMGVYLQSITESIPPTSEGVPLIGMYYVSSLLMVCLATCVNVITLNMHRNGAANQGRHVPAWMQKWILGYLATFMRMSIREPDSIALLKASQSKKSTIRRSSILRDLKRVKNMSNVRAKSKEQNANRECECMDPLVHIYAESIMTSLVSDPKPMNGSTIREDFASESTFLGRVVSDGIMPRISASSNSVLTEFETRFRRILKRVYRSLQQHEIREEILDERSRIQWQWQQLASVVDRLLLCLFCTATLFTIICLLIVPVVYRDNDVLSILNFF</sequence>
<evidence type="ECO:0000250" key="1"/>
<evidence type="ECO:0000250" key="2">
    <source>
        <dbReference type="UniProtKB" id="P36544"/>
    </source>
</evidence>
<evidence type="ECO:0000250" key="3">
    <source>
        <dbReference type="UniProtKB" id="P54245"/>
    </source>
</evidence>
<evidence type="ECO:0000255" key="4"/>
<evidence type="ECO:0000305" key="5"/>
<evidence type="ECO:0000312" key="6">
    <source>
        <dbReference type="EMBL" id="CAP34218.2"/>
    </source>
</evidence>
<name>LGC4_CAEBR</name>
<keyword id="KW-1003">Cell membrane</keyword>
<keyword id="KW-1015">Disulfide bond</keyword>
<keyword id="KW-0325">Glycoprotein</keyword>
<keyword id="KW-0407">Ion channel</keyword>
<keyword id="KW-0406">Ion transport</keyword>
<keyword id="KW-1071">Ligand-gated ion channel</keyword>
<keyword id="KW-0472">Membrane</keyword>
<keyword id="KW-0628">Postsynaptic cell membrane</keyword>
<keyword id="KW-0675">Receptor</keyword>
<keyword id="KW-1185">Reference proteome</keyword>
<keyword id="KW-0732">Signal</keyword>
<keyword id="KW-0770">Synapse</keyword>
<keyword id="KW-0812">Transmembrane</keyword>
<keyword id="KW-1133">Transmembrane helix</keyword>
<keyword id="KW-0813">Transport</keyword>
<accession>A8XNX8</accession>
<gene>
    <name evidence="6" type="primary">lgc-4</name>
    <name type="ORF">CBG16183</name>
</gene>
<organism>
    <name type="scientific">Caenorhabditis briggsae</name>
    <dbReference type="NCBI Taxonomy" id="6238"/>
    <lineage>
        <taxon>Eukaryota</taxon>
        <taxon>Metazoa</taxon>
        <taxon>Ecdysozoa</taxon>
        <taxon>Nematoda</taxon>
        <taxon>Chromadorea</taxon>
        <taxon>Rhabditida</taxon>
        <taxon>Rhabditina</taxon>
        <taxon>Rhabditomorpha</taxon>
        <taxon>Rhabditoidea</taxon>
        <taxon>Rhabditidae</taxon>
        <taxon>Peloderinae</taxon>
        <taxon>Caenorhabditis</taxon>
    </lineage>
</organism>
<protein>
    <recommendedName>
        <fullName evidence="3">Ligand-gated ion channel 4</fullName>
    </recommendedName>
</protein>
<comment type="function">
    <text evidence="1">Acetylcholine receptor.</text>
</comment>
<comment type="subcellular location">
    <subcellularLocation>
        <location evidence="2">Postsynaptic cell membrane</location>
        <topology evidence="2">Multi-pass membrane protein</topology>
    </subcellularLocation>
    <subcellularLocation>
        <location evidence="2">Cell membrane</location>
        <topology evidence="2">Multi-pass membrane protein</topology>
    </subcellularLocation>
</comment>
<comment type="similarity">
    <text evidence="5">Belongs to the ligand-gated ion channel (TC 1.A.9) family.</text>
</comment>
<dbReference type="EMBL" id="HE600961">
    <property type="protein sequence ID" value="CAP34218.2"/>
    <property type="molecule type" value="Genomic_DNA"/>
</dbReference>
<dbReference type="SMR" id="A8XNX8"/>
<dbReference type="FunCoup" id="A8XNX8">
    <property type="interactions" value="62"/>
</dbReference>
<dbReference type="STRING" id="6238.A8XNX8"/>
<dbReference type="GlyCosmos" id="A8XNX8">
    <property type="glycosylation" value="5 sites, No reported glycans"/>
</dbReference>
<dbReference type="EnsemblMetazoa" id="CBG16183.1">
    <property type="protein sequence ID" value="CBG16183.1"/>
    <property type="gene ID" value="WBGene00036209"/>
</dbReference>
<dbReference type="WormBase" id="CBG16183">
    <property type="protein sequence ID" value="CBP26036"/>
    <property type="gene ID" value="WBGene00036209"/>
    <property type="gene designation" value="Cbr-lgc-4"/>
</dbReference>
<dbReference type="eggNOG" id="KOG3645">
    <property type="taxonomic scope" value="Eukaryota"/>
</dbReference>
<dbReference type="HOGENOM" id="CLU_018074_0_3_1"/>
<dbReference type="InParanoid" id="A8XNX8"/>
<dbReference type="OMA" id="IVIRIHM"/>
<dbReference type="Proteomes" id="UP000008549">
    <property type="component" value="Unassembled WGS sequence"/>
</dbReference>
<dbReference type="GO" id="GO:0043005">
    <property type="term" value="C:neuron projection"/>
    <property type="evidence" value="ECO:0000318"/>
    <property type="project" value="GO_Central"/>
</dbReference>
<dbReference type="GO" id="GO:0005886">
    <property type="term" value="C:plasma membrane"/>
    <property type="evidence" value="ECO:0000318"/>
    <property type="project" value="GO_Central"/>
</dbReference>
<dbReference type="GO" id="GO:0045211">
    <property type="term" value="C:postsynaptic membrane"/>
    <property type="evidence" value="ECO:0007669"/>
    <property type="project" value="UniProtKB-SubCell"/>
</dbReference>
<dbReference type="GO" id="GO:0045202">
    <property type="term" value="C:synapse"/>
    <property type="evidence" value="ECO:0000318"/>
    <property type="project" value="GO_Central"/>
</dbReference>
<dbReference type="GO" id="GO:1902495">
    <property type="term" value="C:transmembrane transporter complex"/>
    <property type="evidence" value="ECO:0000318"/>
    <property type="project" value="GO_Central"/>
</dbReference>
<dbReference type="GO" id="GO:0022848">
    <property type="term" value="F:acetylcholine-gated monoatomic cation-selective channel activity"/>
    <property type="evidence" value="ECO:0007669"/>
    <property type="project" value="InterPro"/>
</dbReference>
<dbReference type="GO" id="GO:0005231">
    <property type="term" value="F:excitatory extracellular ligand-gated monoatomic ion channel activity"/>
    <property type="evidence" value="ECO:0000318"/>
    <property type="project" value="GO_Central"/>
</dbReference>
<dbReference type="GO" id="GO:0004888">
    <property type="term" value="F:transmembrane signaling receptor activity"/>
    <property type="evidence" value="ECO:0007669"/>
    <property type="project" value="InterPro"/>
</dbReference>
<dbReference type="GO" id="GO:1904315">
    <property type="term" value="F:transmitter-gated monoatomic ion channel activity involved in regulation of postsynaptic membrane potential"/>
    <property type="evidence" value="ECO:0000318"/>
    <property type="project" value="GO_Central"/>
</dbReference>
<dbReference type="GO" id="GO:0007268">
    <property type="term" value="P:chemical synaptic transmission"/>
    <property type="evidence" value="ECO:0000318"/>
    <property type="project" value="GO_Central"/>
</dbReference>
<dbReference type="GO" id="GO:0034220">
    <property type="term" value="P:monoatomic ion transmembrane transport"/>
    <property type="evidence" value="ECO:0000318"/>
    <property type="project" value="GO_Central"/>
</dbReference>
<dbReference type="GO" id="GO:0042391">
    <property type="term" value="P:regulation of membrane potential"/>
    <property type="evidence" value="ECO:0000318"/>
    <property type="project" value="GO_Central"/>
</dbReference>
<dbReference type="CDD" id="cd18997">
    <property type="entry name" value="LGIC_ECD_nAChR"/>
    <property type="match status" value="1"/>
</dbReference>
<dbReference type="CDD" id="cd19051">
    <property type="entry name" value="LGIC_TM_cation"/>
    <property type="match status" value="1"/>
</dbReference>
<dbReference type="FunFam" id="1.20.58.390:FF:000043">
    <property type="entry name" value="AcetylCholine Receptor"/>
    <property type="match status" value="1"/>
</dbReference>
<dbReference type="FunFam" id="2.70.170.10:FF:000061">
    <property type="entry name" value="Ligand-gated ion channel 4"/>
    <property type="match status" value="1"/>
</dbReference>
<dbReference type="Gene3D" id="2.70.170.10">
    <property type="entry name" value="Neurotransmitter-gated ion-channel ligand-binding domain"/>
    <property type="match status" value="1"/>
</dbReference>
<dbReference type="Gene3D" id="1.20.58.390">
    <property type="entry name" value="Neurotransmitter-gated ion-channel transmembrane domain"/>
    <property type="match status" value="1"/>
</dbReference>
<dbReference type="InterPro" id="IPR006202">
    <property type="entry name" value="Neur_chan_lig-bd"/>
</dbReference>
<dbReference type="InterPro" id="IPR036734">
    <property type="entry name" value="Neur_chan_lig-bd_sf"/>
</dbReference>
<dbReference type="InterPro" id="IPR006201">
    <property type="entry name" value="Neur_channel"/>
</dbReference>
<dbReference type="InterPro" id="IPR036719">
    <property type="entry name" value="Neuro-gated_channel_TM_sf"/>
</dbReference>
<dbReference type="InterPro" id="IPR038050">
    <property type="entry name" value="Neuro_actylchol_rec"/>
</dbReference>
<dbReference type="InterPro" id="IPR006029">
    <property type="entry name" value="Neurotrans-gated_channel_TM"/>
</dbReference>
<dbReference type="InterPro" id="IPR018000">
    <property type="entry name" value="Neurotransmitter_ion_chnl_CS"/>
</dbReference>
<dbReference type="InterPro" id="IPR002394">
    <property type="entry name" value="Nicotinic_acetylcholine_rcpt"/>
</dbReference>
<dbReference type="NCBIfam" id="TIGR00860">
    <property type="entry name" value="LIC"/>
    <property type="match status" value="1"/>
</dbReference>
<dbReference type="PANTHER" id="PTHR18945">
    <property type="entry name" value="NEUROTRANSMITTER GATED ION CHANNEL"/>
    <property type="match status" value="1"/>
</dbReference>
<dbReference type="Pfam" id="PF02931">
    <property type="entry name" value="Neur_chan_LBD"/>
    <property type="match status" value="1"/>
</dbReference>
<dbReference type="Pfam" id="PF02932">
    <property type="entry name" value="Neur_chan_memb"/>
    <property type="match status" value="1"/>
</dbReference>
<dbReference type="PRINTS" id="PR00254">
    <property type="entry name" value="NICOTINICR"/>
</dbReference>
<dbReference type="PRINTS" id="PR00252">
    <property type="entry name" value="NRIONCHANNEL"/>
</dbReference>
<dbReference type="SUPFAM" id="SSF90112">
    <property type="entry name" value="Neurotransmitter-gated ion-channel transmembrane pore"/>
    <property type="match status" value="1"/>
</dbReference>
<dbReference type="SUPFAM" id="SSF63712">
    <property type="entry name" value="Nicotinic receptor ligand binding domain-like"/>
    <property type="match status" value="1"/>
</dbReference>
<dbReference type="PROSITE" id="PS00236">
    <property type="entry name" value="NEUROTR_ION_CHANNEL"/>
    <property type="match status" value="1"/>
</dbReference>
<feature type="signal peptide" evidence="4">
    <location>
        <begin position="1"/>
        <end position="25"/>
    </location>
</feature>
<feature type="chain" id="PRO_0000365066" description="Ligand-gated ion channel 4" evidence="4">
    <location>
        <begin position="26"/>
        <end position="636"/>
    </location>
</feature>
<feature type="topological domain" description="Extracellular" evidence="4">
    <location>
        <begin position="26"/>
        <end position="326"/>
    </location>
</feature>
<feature type="transmembrane region" description="Helical" evidence="4">
    <location>
        <begin position="327"/>
        <end position="347"/>
    </location>
</feature>
<feature type="transmembrane region" description="Helical" evidence="4">
    <location>
        <begin position="357"/>
        <end position="377"/>
    </location>
</feature>
<feature type="transmembrane region" description="Helical" evidence="4">
    <location>
        <begin position="383"/>
        <end position="403"/>
    </location>
</feature>
<feature type="topological domain" description="Cytoplasmic" evidence="4">
    <location>
        <begin position="404"/>
        <end position="602"/>
    </location>
</feature>
<feature type="transmembrane region" description="Helical" evidence="4">
    <location>
        <begin position="603"/>
        <end position="623"/>
    </location>
</feature>
<feature type="glycosylation site" description="N-linked (GlcNAc...) asparagine" evidence="4">
    <location>
        <position position="45"/>
    </location>
</feature>
<feature type="glycosylation site" description="N-linked (GlcNAc...) asparagine" evidence="4">
    <location>
        <position position="141"/>
    </location>
</feature>
<feature type="glycosylation site" description="N-linked (GlcNAc...) asparagine" evidence="4">
    <location>
        <position position="179"/>
    </location>
</feature>
<feature type="glycosylation site" description="N-linked (GlcNAc...) asparagine" evidence="4">
    <location>
        <position position="227"/>
    </location>
</feature>
<feature type="glycosylation site" description="N-linked (GlcNAc...) asparagine" evidence="4">
    <location>
        <position position="284"/>
    </location>
</feature>
<feature type="disulfide bond" evidence="3">
    <location>
        <begin position="240"/>
        <end position="254"/>
    </location>
</feature>